<accession>C4K0H2</accession>
<name>FOLD_RICPU</name>
<proteinExistence type="inferred from homology"/>
<dbReference type="EC" id="1.5.1.5" evidence="1"/>
<dbReference type="EC" id="3.5.4.9" evidence="1"/>
<dbReference type="EMBL" id="CP001227">
    <property type="protein sequence ID" value="ACR47073.1"/>
    <property type="molecule type" value="Genomic_DNA"/>
</dbReference>
<dbReference type="RefSeq" id="WP_012736376.1">
    <property type="nucleotide sequence ID" value="NC_012730.1"/>
</dbReference>
<dbReference type="SMR" id="C4K0H2"/>
<dbReference type="KEGG" id="rpk:RPR_00445"/>
<dbReference type="HOGENOM" id="CLU_034045_2_1_5"/>
<dbReference type="UniPathway" id="UPA00193"/>
<dbReference type="Proteomes" id="UP000005015">
    <property type="component" value="Chromosome"/>
</dbReference>
<dbReference type="GO" id="GO:0005829">
    <property type="term" value="C:cytosol"/>
    <property type="evidence" value="ECO:0007669"/>
    <property type="project" value="TreeGrafter"/>
</dbReference>
<dbReference type="GO" id="GO:0004477">
    <property type="term" value="F:methenyltetrahydrofolate cyclohydrolase activity"/>
    <property type="evidence" value="ECO:0007669"/>
    <property type="project" value="UniProtKB-UniRule"/>
</dbReference>
<dbReference type="GO" id="GO:0004488">
    <property type="term" value="F:methylenetetrahydrofolate dehydrogenase (NADP+) activity"/>
    <property type="evidence" value="ECO:0007669"/>
    <property type="project" value="UniProtKB-UniRule"/>
</dbReference>
<dbReference type="GO" id="GO:0000105">
    <property type="term" value="P:L-histidine biosynthetic process"/>
    <property type="evidence" value="ECO:0007669"/>
    <property type="project" value="UniProtKB-KW"/>
</dbReference>
<dbReference type="GO" id="GO:0009086">
    <property type="term" value="P:methionine biosynthetic process"/>
    <property type="evidence" value="ECO:0007669"/>
    <property type="project" value="UniProtKB-KW"/>
</dbReference>
<dbReference type="GO" id="GO:0006164">
    <property type="term" value="P:purine nucleotide biosynthetic process"/>
    <property type="evidence" value="ECO:0007669"/>
    <property type="project" value="UniProtKB-KW"/>
</dbReference>
<dbReference type="GO" id="GO:0035999">
    <property type="term" value="P:tetrahydrofolate interconversion"/>
    <property type="evidence" value="ECO:0007669"/>
    <property type="project" value="UniProtKB-UniRule"/>
</dbReference>
<dbReference type="CDD" id="cd01080">
    <property type="entry name" value="NAD_bind_m-THF_DH_Cyclohyd"/>
    <property type="match status" value="1"/>
</dbReference>
<dbReference type="FunFam" id="3.40.50.720:FF:000094">
    <property type="entry name" value="Bifunctional protein FolD"/>
    <property type="match status" value="1"/>
</dbReference>
<dbReference type="FunFam" id="3.40.50.10860:FF:000005">
    <property type="entry name" value="C-1-tetrahydrofolate synthase, cytoplasmic, putative"/>
    <property type="match status" value="1"/>
</dbReference>
<dbReference type="Gene3D" id="3.40.50.10860">
    <property type="entry name" value="Leucine Dehydrogenase, chain A, domain 1"/>
    <property type="match status" value="1"/>
</dbReference>
<dbReference type="Gene3D" id="3.40.50.720">
    <property type="entry name" value="NAD(P)-binding Rossmann-like Domain"/>
    <property type="match status" value="1"/>
</dbReference>
<dbReference type="HAMAP" id="MF_01576">
    <property type="entry name" value="THF_DHG_CYH"/>
    <property type="match status" value="1"/>
</dbReference>
<dbReference type="InterPro" id="IPR046346">
    <property type="entry name" value="Aminoacid_DH-like_N_sf"/>
</dbReference>
<dbReference type="InterPro" id="IPR036291">
    <property type="entry name" value="NAD(P)-bd_dom_sf"/>
</dbReference>
<dbReference type="InterPro" id="IPR000672">
    <property type="entry name" value="THF_DH/CycHdrlase"/>
</dbReference>
<dbReference type="InterPro" id="IPR020630">
    <property type="entry name" value="THF_DH/CycHdrlase_cat_dom"/>
</dbReference>
<dbReference type="InterPro" id="IPR020867">
    <property type="entry name" value="THF_DH/CycHdrlase_CS"/>
</dbReference>
<dbReference type="InterPro" id="IPR020631">
    <property type="entry name" value="THF_DH/CycHdrlase_NAD-bd_dom"/>
</dbReference>
<dbReference type="NCBIfam" id="NF010768">
    <property type="entry name" value="PRK14171.1"/>
    <property type="match status" value="1"/>
</dbReference>
<dbReference type="PANTHER" id="PTHR48099:SF5">
    <property type="entry name" value="C-1-TETRAHYDROFOLATE SYNTHASE, CYTOPLASMIC"/>
    <property type="match status" value="1"/>
</dbReference>
<dbReference type="PANTHER" id="PTHR48099">
    <property type="entry name" value="C-1-TETRAHYDROFOLATE SYNTHASE, CYTOPLASMIC-RELATED"/>
    <property type="match status" value="1"/>
</dbReference>
<dbReference type="Pfam" id="PF00763">
    <property type="entry name" value="THF_DHG_CYH"/>
    <property type="match status" value="1"/>
</dbReference>
<dbReference type="Pfam" id="PF02882">
    <property type="entry name" value="THF_DHG_CYH_C"/>
    <property type="match status" value="1"/>
</dbReference>
<dbReference type="PRINTS" id="PR00085">
    <property type="entry name" value="THFDHDRGNASE"/>
</dbReference>
<dbReference type="SUPFAM" id="SSF53223">
    <property type="entry name" value="Aminoacid dehydrogenase-like, N-terminal domain"/>
    <property type="match status" value="1"/>
</dbReference>
<dbReference type="SUPFAM" id="SSF51735">
    <property type="entry name" value="NAD(P)-binding Rossmann-fold domains"/>
    <property type="match status" value="1"/>
</dbReference>
<dbReference type="PROSITE" id="PS00766">
    <property type="entry name" value="THF_DHG_CYH_1"/>
    <property type="match status" value="1"/>
</dbReference>
<dbReference type="PROSITE" id="PS00767">
    <property type="entry name" value="THF_DHG_CYH_2"/>
    <property type="match status" value="1"/>
</dbReference>
<organism>
    <name type="scientific">Rickettsia peacockii (strain Rustic)</name>
    <dbReference type="NCBI Taxonomy" id="562019"/>
    <lineage>
        <taxon>Bacteria</taxon>
        <taxon>Pseudomonadati</taxon>
        <taxon>Pseudomonadota</taxon>
        <taxon>Alphaproteobacteria</taxon>
        <taxon>Rickettsiales</taxon>
        <taxon>Rickettsiaceae</taxon>
        <taxon>Rickettsieae</taxon>
        <taxon>Rickettsia</taxon>
        <taxon>spotted fever group</taxon>
    </lineage>
</organism>
<keyword id="KW-0028">Amino-acid biosynthesis</keyword>
<keyword id="KW-0368">Histidine biosynthesis</keyword>
<keyword id="KW-0378">Hydrolase</keyword>
<keyword id="KW-0486">Methionine biosynthesis</keyword>
<keyword id="KW-0511">Multifunctional enzyme</keyword>
<keyword id="KW-0521">NADP</keyword>
<keyword id="KW-0554">One-carbon metabolism</keyword>
<keyword id="KW-0560">Oxidoreductase</keyword>
<keyword id="KW-0658">Purine biosynthesis</keyword>
<gene>
    <name evidence="1" type="primary">folD</name>
    <name type="ordered locus">RPR_00445</name>
</gene>
<sequence length="288" mass="30982">MNNIIDGKALANEILADLKLEIQELTSHTNASPKLAIVLVGDNPASIIYVRNKIKNAHKIGIYTVLINLSATIHTNDLISKINELNLDNEISGIIVQLPLPSSIDKNKILSAVSPSKDIDGFHPLNVGYLHSGISQGFIPCTALGCLAAIKKYEPNLTGKNVVIIGRSNIVGKPLSALLLKENCSVTICHSKTHNLRSITSKADIVVAAIGSPLKLTAEYFNPESIVIDVGINRISSNKIIGDVDFENVQSKVQYITPIPGGIGPMTIAFLLKNTVKAFKDSLYTLDT</sequence>
<comment type="function">
    <text evidence="1">Catalyzes the oxidation of 5,10-methylenetetrahydrofolate to 5,10-methenyltetrahydrofolate and then the hydrolysis of 5,10-methenyltetrahydrofolate to 10-formyltetrahydrofolate.</text>
</comment>
<comment type="catalytic activity">
    <reaction evidence="1">
        <text>(6R)-5,10-methylene-5,6,7,8-tetrahydrofolate + NADP(+) = (6R)-5,10-methenyltetrahydrofolate + NADPH</text>
        <dbReference type="Rhea" id="RHEA:22812"/>
        <dbReference type="ChEBI" id="CHEBI:15636"/>
        <dbReference type="ChEBI" id="CHEBI:57455"/>
        <dbReference type="ChEBI" id="CHEBI:57783"/>
        <dbReference type="ChEBI" id="CHEBI:58349"/>
        <dbReference type="EC" id="1.5.1.5"/>
    </reaction>
</comment>
<comment type="catalytic activity">
    <reaction evidence="1">
        <text>(6R)-5,10-methenyltetrahydrofolate + H2O = (6R)-10-formyltetrahydrofolate + H(+)</text>
        <dbReference type="Rhea" id="RHEA:23700"/>
        <dbReference type="ChEBI" id="CHEBI:15377"/>
        <dbReference type="ChEBI" id="CHEBI:15378"/>
        <dbReference type="ChEBI" id="CHEBI:57455"/>
        <dbReference type="ChEBI" id="CHEBI:195366"/>
        <dbReference type="EC" id="3.5.4.9"/>
    </reaction>
</comment>
<comment type="pathway">
    <text evidence="1">One-carbon metabolism; tetrahydrofolate interconversion.</text>
</comment>
<comment type="subunit">
    <text evidence="1">Homodimer.</text>
</comment>
<comment type="similarity">
    <text evidence="1">Belongs to the tetrahydrofolate dehydrogenase/cyclohydrolase family.</text>
</comment>
<evidence type="ECO:0000255" key="1">
    <source>
        <dbReference type="HAMAP-Rule" id="MF_01576"/>
    </source>
</evidence>
<protein>
    <recommendedName>
        <fullName evidence="1">Bifunctional protein FolD</fullName>
    </recommendedName>
    <domain>
        <recommendedName>
            <fullName evidence="1">Methylenetetrahydrofolate dehydrogenase</fullName>
            <ecNumber evidence="1">1.5.1.5</ecNumber>
        </recommendedName>
    </domain>
    <domain>
        <recommendedName>
            <fullName evidence="1">Methenyltetrahydrofolate cyclohydrolase</fullName>
            <ecNumber evidence="1">3.5.4.9</ecNumber>
        </recommendedName>
    </domain>
</protein>
<feature type="chain" id="PRO_1000215606" description="Bifunctional protein FolD">
    <location>
        <begin position="1"/>
        <end position="288"/>
    </location>
</feature>
<feature type="binding site" evidence="1">
    <location>
        <begin position="166"/>
        <end position="168"/>
    </location>
    <ligand>
        <name>NADP(+)</name>
        <dbReference type="ChEBI" id="CHEBI:58349"/>
    </ligand>
</feature>
<feature type="binding site" evidence="1">
    <location>
        <position position="191"/>
    </location>
    <ligand>
        <name>NADP(+)</name>
        <dbReference type="ChEBI" id="CHEBI:58349"/>
    </ligand>
</feature>
<feature type="binding site" evidence="1">
    <location>
        <position position="232"/>
    </location>
    <ligand>
        <name>NADP(+)</name>
        <dbReference type="ChEBI" id="CHEBI:58349"/>
    </ligand>
</feature>
<reference key="1">
    <citation type="journal article" date="2009" name="PLoS ONE">
        <title>Genome sequence of the endosymbiont Rickettsia peacockii and comparison with virulent Rickettsia rickettsii: identification of virulence factors.</title>
        <authorList>
            <person name="Felsheim R.F."/>
            <person name="Kurtti T.J."/>
            <person name="Munderloh U.G."/>
        </authorList>
    </citation>
    <scope>NUCLEOTIDE SEQUENCE [LARGE SCALE GENOMIC DNA]</scope>
    <source>
        <strain>Rustic</strain>
    </source>
</reference>